<organism>
    <name type="scientific">Pseudomonas aeruginosa (strain ATCC 15692 / DSM 22644 / CIP 104116 / JCM 14847 / LMG 12228 / 1C / PRS 101 / PAO1)</name>
    <dbReference type="NCBI Taxonomy" id="208964"/>
    <lineage>
        <taxon>Bacteria</taxon>
        <taxon>Pseudomonadati</taxon>
        <taxon>Pseudomonadota</taxon>
        <taxon>Gammaproteobacteria</taxon>
        <taxon>Pseudomonadales</taxon>
        <taxon>Pseudomonadaceae</taxon>
        <taxon>Pseudomonas</taxon>
    </lineage>
</organism>
<accession>Q9HVS1</accession>
<evidence type="ECO:0000255" key="1"/>
<evidence type="ECO:0000269" key="2">
    <source>
    </source>
</evidence>
<evidence type="ECO:0000305" key="3"/>
<evidence type="ECO:0000312" key="4">
    <source>
        <dbReference type="EMBL" id="AAG07888.1"/>
    </source>
</evidence>
<protein>
    <recommendedName>
        <fullName evidence="3">Dipeptide-binding protein</fullName>
    </recommendedName>
</protein>
<feature type="signal peptide" evidence="1">
    <location>
        <begin position="1"/>
        <end position="24"/>
    </location>
</feature>
<feature type="chain" id="PRO_5004331147" description="Dipeptide-binding protein" evidence="1">
    <location>
        <begin position="25"/>
        <end position="533"/>
    </location>
</feature>
<dbReference type="EMBL" id="AE004091">
    <property type="protein sequence ID" value="AAG07888.1"/>
    <property type="molecule type" value="Genomic_DNA"/>
</dbReference>
<dbReference type="PIR" id="C83084">
    <property type="entry name" value="C83084"/>
</dbReference>
<dbReference type="RefSeq" id="NP_253190.1">
    <property type="nucleotide sequence ID" value="NC_002516.2"/>
</dbReference>
<dbReference type="RefSeq" id="WP_003112861.1">
    <property type="nucleotide sequence ID" value="NC_002516.2"/>
</dbReference>
<dbReference type="SMR" id="Q9HVS1"/>
<dbReference type="FunCoup" id="Q9HVS1">
    <property type="interactions" value="226"/>
</dbReference>
<dbReference type="STRING" id="208964.PA4500"/>
<dbReference type="PaxDb" id="208964-PA4500"/>
<dbReference type="GeneID" id="881062"/>
<dbReference type="KEGG" id="pae:PA4500"/>
<dbReference type="PATRIC" id="fig|208964.12.peg.4710"/>
<dbReference type="PseudoCAP" id="PA4500"/>
<dbReference type="HOGENOM" id="CLU_017028_7_0_6"/>
<dbReference type="InParanoid" id="Q9HVS1"/>
<dbReference type="OrthoDB" id="9801912at2"/>
<dbReference type="PhylomeDB" id="Q9HVS1"/>
<dbReference type="BioCyc" id="PAER208964:G1FZ6-4589-MONOMER"/>
<dbReference type="Proteomes" id="UP000002438">
    <property type="component" value="Chromosome"/>
</dbReference>
<dbReference type="GO" id="GO:0043190">
    <property type="term" value="C:ATP-binding cassette (ABC) transporter complex"/>
    <property type="evidence" value="ECO:0007669"/>
    <property type="project" value="InterPro"/>
</dbReference>
<dbReference type="GO" id="GO:0030288">
    <property type="term" value="C:outer membrane-bounded periplasmic space"/>
    <property type="evidence" value="ECO:0000318"/>
    <property type="project" value="GO_Central"/>
</dbReference>
<dbReference type="GO" id="GO:1904680">
    <property type="term" value="F:peptide transmembrane transporter activity"/>
    <property type="evidence" value="ECO:0000318"/>
    <property type="project" value="GO_Central"/>
</dbReference>
<dbReference type="GO" id="GO:0042938">
    <property type="term" value="P:dipeptide transport"/>
    <property type="evidence" value="ECO:0000318"/>
    <property type="project" value="GO_Central"/>
</dbReference>
<dbReference type="GO" id="GO:0015031">
    <property type="term" value="P:protein transport"/>
    <property type="evidence" value="ECO:0007669"/>
    <property type="project" value="UniProtKB-KW"/>
</dbReference>
<dbReference type="CDD" id="cd08493">
    <property type="entry name" value="PBP2_DppA_like"/>
    <property type="match status" value="1"/>
</dbReference>
<dbReference type="FunFam" id="3.10.105.10:FF:000002">
    <property type="entry name" value="Dipeptide ABC transporter, substrate-binding protein"/>
    <property type="match status" value="1"/>
</dbReference>
<dbReference type="FunFam" id="3.40.190.10:FF:000036">
    <property type="entry name" value="Dipeptide ABC transporter, substrate-binding protein"/>
    <property type="match status" value="1"/>
</dbReference>
<dbReference type="FunFam" id="3.90.76.10:FF:000002">
    <property type="entry name" value="Dipeptide ABC transporter, substrate-binding protein"/>
    <property type="match status" value="1"/>
</dbReference>
<dbReference type="Gene3D" id="3.90.76.10">
    <property type="entry name" value="Dipeptide-binding Protein, Domain 1"/>
    <property type="match status" value="1"/>
</dbReference>
<dbReference type="Gene3D" id="3.10.105.10">
    <property type="entry name" value="Dipeptide-binding Protein, Domain 3"/>
    <property type="match status" value="1"/>
</dbReference>
<dbReference type="Gene3D" id="3.40.190.10">
    <property type="entry name" value="Periplasmic binding protein-like II"/>
    <property type="match status" value="1"/>
</dbReference>
<dbReference type="InterPro" id="IPR030678">
    <property type="entry name" value="Peptide/Ni-bd"/>
</dbReference>
<dbReference type="InterPro" id="IPR039424">
    <property type="entry name" value="SBP_5"/>
</dbReference>
<dbReference type="InterPro" id="IPR023765">
    <property type="entry name" value="SBP_5_CS"/>
</dbReference>
<dbReference type="InterPro" id="IPR000914">
    <property type="entry name" value="SBP_5_dom"/>
</dbReference>
<dbReference type="PANTHER" id="PTHR30290:SF38">
    <property type="entry name" value="D,D-DIPEPTIDE-BINDING PERIPLASMIC PROTEIN DDPA-RELATED"/>
    <property type="match status" value="1"/>
</dbReference>
<dbReference type="PANTHER" id="PTHR30290">
    <property type="entry name" value="PERIPLASMIC BINDING COMPONENT OF ABC TRANSPORTER"/>
    <property type="match status" value="1"/>
</dbReference>
<dbReference type="Pfam" id="PF00496">
    <property type="entry name" value="SBP_bac_5"/>
    <property type="match status" value="1"/>
</dbReference>
<dbReference type="PIRSF" id="PIRSF002741">
    <property type="entry name" value="MppA"/>
    <property type="match status" value="1"/>
</dbReference>
<dbReference type="SUPFAM" id="SSF53850">
    <property type="entry name" value="Periplasmic binding protein-like II"/>
    <property type="match status" value="1"/>
</dbReference>
<dbReference type="PROSITE" id="PS01040">
    <property type="entry name" value="SBP_BACTERIAL_5"/>
    <property type="match status" value="1"/>
</dbReference>
<comment type="function">
    <text evidence="2">Binds different dipeptides. Probably bind only L-amino acid containing dipeptides.</text>
</comment>
<comment type="subcellular location">
    <subcellularLocation>
        <location evidence="3">Periplasm</location>
    </subcellularLocation>
</comment>
<comment type="similarity">
    <text evidence="3">Belongs to the bacterial solute-binding protein 5 family.</text>
</comment>
<reference key="1">
    <citation type="journal article" date="2000" name="Nature">
        <title>Complete genome sequence of Pseudomonas aeruginosa PAO1, an opportunistic pathogen.</title>
        <authorList>
            <person name="Stover C.K."/>
            <person name="Pham X.-Q.T."/>
            <person name="Erwin A.L."/>
            <person name="Mizoguchi S.D."/>
            <person name="Warrener P."/>
            <person name="Hickey M.J."/>
            <person name="Brinkman F.S.L."/>
            <person name="Hufnagle W.O."/>
            <person name="Kowalik D.J."/>
            <person name="Lagrou M."/>
            <person name="Garber R.L."/>
            <person name="Goltry L."/>
            <person name="Tolentino E."/>
            <person name="Westbrock-Wadman S."/>
            <person name="Yuan Y."/>
            <person name="Brody L.L."/>
            <person name="Coulter S.N."/>
            <person name="Folger K.R."/>
            <person name="Kas A."/>
            <person name="Larbig K."/>
            <person name="Lim R.M."/>
            <person name="Smith K.A."/>
            <person name="Spencer D.H."/>
            <person name="Wong G.K.-S."/>
            <person name="Wu Z."/>
            <person name="Paulsen I.T."/>
            <person name="Reizer J."/>
            <person name="Saier M.H. Jr."/>
            <person name="Hancock R.E.W."/>
            <person name="Lory S."/>
            <person name="Olson M.V."/>
        </authorList>
    </citation>
    <scope>NUCLEOTIDE SEQUENCE [LARGE SCALE GENOMIC DNA]</scope>
    <source>
        <strain>ATCC 15692 / DSM 22644 / CIP 104116 / JCM 14847 / LMG 12228 / 1C / PRS 101 / PAO1</strain>
    </source>
</reference>
<reference key="2">
    <citation type="journal article" date="2019" name="Int. J. Mol. Sci.">
        <title>Determination of Ligand Profiles for Pseudomonas aeruginosa Solute Binding Proteins.</title>
        <authorList>
            <person name="Fernandez M."/>
            <person name="Rico-Jimenez M."/>
            <person name="Ortega A."/>
            <person name="Daddaoua A."/>
            <person name="Garcia Garcia A.I."/>
            <person name="Martin-Mora D."/>
            <person name="Torres N.M."/>
            <person name="Tajuelo A."/>
            <person name="Matilla M.A."/>
            <person name="Krell T."/>
        </authorList>
    </citation>
    <scope>FUNCTION AS A BINDING PROTEIN</scope>
    <source>
        <strain>ATCC 15692 / DSM 22644 / CIP 104116 / JCM 14847 / LMG 12228 / 1C / PRS 101 / PAO1</strain>
    </source>
</reference>
<name>DIPBP_PSEAE</name>
<proteinExistence type="evidence at protein level"/>
<keyword id="KW-0571">Peptide transport</keyword>
<keyword id="KW-0574">Periplasm</keyword>
<keyword id="KW-0653">Protein transport</keyword>
<keyword id="KW-1185">Reference proteome</keyword>
<keyword id="KW-0732">Signal</keyword>
<keyword id="KW-0813">Transport</keyword>
<sequence length="533" mass="59675">MRKILPLRAWLAAGLILGSPFSHAASNLVFCSEGSPAGFDPAQYTTGTDYDATSVTLFNRLVQFERGGTRAIPALAESWDIGDDGKTYTFHLRKGVKFHSTDYFKPTREFNADDVLFTFQRMLDKNHPFRKAYPTEFPYFTDMGLDKNIARVEKLDEHRVKFTLNEVDAAFIQNLAMDVASIQSAEYAGQLLEAGKPQQINQKPIGTGPFILSRYQKDAQIRFKGNKDYWKPEDVKIDNLIFSINTDAAVRAQKLKAGECQITLNPRPADLKALQEAANLKVPSQPGFNLGYIAYNVTHKPFDQLEVRQALDMAVNKQAIIDAVYQGAGQLAVNGMPPTQWSYDETIKDAPFDPAKARELLKKAGVAEGTEITLWAMPVQRPYNPNAKLMAEMIQADWAKIGIKARIVSYEWGEYIKRAHAGEHDAMLFGWTGDNGDPDNWLATLYGCDSINGNNVSKWCDAAYDKLVKAAKRVSDQDKRSELYKQAQHILKEQVPITPIAHSTVYQPMSKSVHGFKISPFSRNAFYGVANQP</sequence>
<gene>
    <name evidence="4" type="ordered locus">PA4500</name>
</gene>